<feature type="chain" id="PRO_0000276456" description="Large ribosomal subunit protein bL27c">
    <location>
        <begin position="1"/>
        <end position="83"/>
    </location>
</feature>
<feature type="region of interest" description="Disordered" evidence="2">
    <location>
        <begin position="1"/>
        <end position="21"/>
    </location>
</feature>
<gene>
    <name evidence="1" type="primary">rpl27</name>
</gene>
<sequence>MAHKKGAGSTKNGRDSNAKRLGVKRFGGEQVTAGNILIRQRGTKFKPGINVGCGKDFTLFALTNGIVKFDYANGTQKCINIID</sequence>
<accession>A0T0G4</accession>
<evidence type="ECO:0000255" key="1">
    <source>
        <dbReference type="HAMAP-Rule" id="MF_00539"/>
    </source>
</evidence>
<evidence type="ECO:0000256" key="2">
    <source>
        <dbReference type="SAM" id="MobiDB-lite"/>
    </source>
</evidence>
<evidence type="ECO:0000305" key="3"/>
<dbReference type="EMBL" id="EF067920">
    <property type="protein sequence ID" value="ABK20662.1"/>
    <property type="molecule type" value="Genomic_DNA"/>
</dbReference>
<dbReference type="RefSeq" id="YP_874439.1">
    <property type="nucleotide sequence ID" value="NC_008588.1"/>
</dbReference>
<dbReference type="SMR" id="A0T0G4"/>
<dbReference type="STRING" id="556484.A0T0G4"/>
<dbReference type="GeneID" id="4524562"/>
<dbReference type="InParanoid" id="A0T0G4"/>
<dbReference type="Proteomes" id="UP000000759">
    <property type="component" value="Chloroplast"/>
</dbReference>
<dbReference type="GO" id="GO:0009507">
    <property type="term" value="C:chloroplast"/>
    <property type="evidence" value="ECO:0007669"/>
    <property type="project" value="UniProtKB-SubCell"/>
</dbReference>
<dbReference type="GO" id="GO:0005762">
    <property type="term" value="C:mitochondrial large ribosomal subunit"/>
    <property type="evidence" value="ECO:0007669"/>
    <property type="project" value="TreeGrafter"/>
</dbReference>
<dbReference type="GO" id="GO:0003735">
    <property type="term" value="F:structural constituent of ribosome"/>
    <property type="evidence" value="ECO:0007669"/>
    <property type="project" value="InterPro"/>
</dbReference>
<dbReference type="GO" id="GO:0006412">
    <property type="term" value="P:translation"/>
    <property type="evidence" value="ECO:0007669"/>
    <property type="project" value="UniProtKB-UniRule"/>
</dbReference>
<dbReference type="FunFam" id="2.40.50.100:FF:000020">
    <property type="entry name" value="50S ribosomal protein L27"/>
    <property type="match status" value="1"/>
</dbReference>
<dbReference type="Gene3D" id="2.40.50.100">
    <property type="match status" value="1"/>
</dbReference>
<dbReference type="HAMAP" id="MF_00539">
    <property type="entry name" value="Ribosomal_bL27"/>
    <property type="match status" value="1"/>
</dbReference>
<dbReference type="InterPro" id="IPR001684">
    <property type="entry name" value="Ribosomal_bL27"/>
</dbReference>
<dbReference type="InterPro" id="IPR018261">
    <property type="entry name" value="Ribosomal_bL27_CS"/>
</dbReference>
<dbReference type="NCBIfam" id="TIGR00062">
    <property type="entry name" value="L27"/>
    <property type="match status" value="1"/>
</dbReference>
<dbReference type="PANTHER" id="PTHR15893:SF0">
    <property type="entry name" value="LARGE RIBOSOMAL SUBUNIT PROTEIN BL27M"/>
    <property type="match status" value="1"/>
</dbReference>
<dbReference type="PANTHER" id="PTHR15893">
    <property type="entry name" value="RIBOSOMAL PROTEIN L27"/>
    <property type="match status" value="1"/>
</dbReference>
<dbReference type="Pfam" id="PF01016">
    <property type="entry name" value="Ribosomal_L27"/>
    <property type="match status" value="1"/>
</dbReference>
<dbReference type="PRINTS" id="PR00063">
    <property type="entry name" value="RIBOSOMALL27"/>
</dbReference>
<dbReference type="SUPFAM" id="SSF110324">
    <property type="entry name" value="Ribosomal L27 protein-like"/>
    <property type="match status" value="1"/>
</dbReference>
<dbReference type="PROSITE" id="PS00831">
    <property type="entry name" value="RIBOSOMAL_L27"/>
    <property type="match status" value="1"/>
</dbReference>
<reference key="1">
    <citation type="journal article" date="2007" name="Mol. Genet. Genomics">
        <title>Chloroplast genomes of the diatoms Phaeodactylum tricornutum and Thalassiosira pseudonana: comparison with other plastid genomes of the red lineage.</title>
        <authorList>
            <person name="Oudot-Le Secq M.-P."/>
            <person name="Grimwood J."/>
            <person name="Shapiro H."/>
            <person name="Armbrust E.V."/>
            <person name="Bowler C."/>
            <person name="Green B.R."/>
        </authorList>
    </citation>
    <scope>NUCLEOTIDE SEQUENCE [LARGE SCALE GENOMIC DNA]</scope>
    <source>
        <strain>CCAP 1055/1</strain>
    </source>
</reference>
<protein>
    <recommendedName>
        <fullName evidence="1">Large ribosomal subunit protein bL27c</fullName>
    </recommendedName>
    <alternativeName>
        <fullName evidence="3">50S ribosomal protein L27, chloroplastic</fullName>
    </alternativeName>
</protein>
<keyword id="KW-0150">Chloroplast</keyword>
<keyword id="KW-0934">Plastid</keyword>
<keyword id="KW-1185">Reference proteome</keyword>
<keyword id="KW-0687">Ribonucleoprotein</keyword>
<keyword id="KW-0689">Ribosomal protein</keyword>
<proteinExistence type="inferred from homology"/>
<name>RK27_PHATC</name>
<comment type="subcellular location">
    <subcellularLocation>
        <location>Plastid</location>
        <location>Chloroplast</location>
    </subcellularLocation>
</comment>
<comment type="similarity">
    <text evidence="1">Belongs to the bacterial ribosomal protein bL27 family.</text>
</comment>
<organism>
    <name type="scientific">Phaeodactylum tricornutum (strain CCAP 1055/1)</name>
    <dbReference type="NCBI Taxonomy" id="556484"/>
    <lineage>
        <taxon>Eukaryota</taxon>
        <taxon>Sar</taxon>
        <taxon>Stramenopiles</taxon>
        <taxon>Ochrophyta</taxon>
        <taxon>Bacillariophyta</taxon>
        <taxon>Bacillariophyceae</taxon>
        <taxon>Bacillariophycidae</taxon>
        <taxon>Naviculales</taxon>
        <taxon>Phaeodactylaceae</taxon>
        <taxon>Phaeodactylum</taxon>
    </lineage>
</organism>
<geneLocation type="chloroplast"/>